<keyword id="KW-0238">DNA-binding</keyword>
<keyword id="KW-0479">Metal-binding</keyword>
<keyword id="KW-0539">Nucleus</keyword>
<keyword id="KW-1267">Proteomics identification</keyword>
<keyword id="KW-1185">Reference proteome</keyword>
<keyword id="KW-0677">Repeat</keyword>
<keyword id="KW-0804">Transcription</keyword>
<keyword id="KW-0805">Transcription regulation</keyword>
<keyword id="KW-0862">Zinc</keyword>
<keyword id="KW-0863">Zinc-finger</keyword>
<reference key="1">
    <citation type="journal article" date="2004" name="Nature">
        <title>The DNA sequence and biology of human chromosome 19.</title>
        <authorList>
            <person name="Grimwood J."/>
            <person name="Gordon L.A."/>
            <person name="Olsen A.S."/>
            <person name="Terry A."/>
            <person name="Schmutz J."/>
            <person name="Lamerdin J.E."/>
            <person name="Hellsten U."/>
            <person name="Goodstein D."/>
            <person name="Couronne O."/>
            <person name="Tran-Gyamfi M."/>
            <person name="Aerts A."/>
            <person name="Altherr M."/>
            <person name="Ashworth L."/>
            <person name="Bajorek E."/>
            <person name="Black S."/>
            <person name="Branscomb E."/>
            <person name="Caenepeel S."/>
            <person name="Carrano A.V."/>
            <person name="Caoile C."/>
            <person name="Chan Y.M."/>
            <person name="Christensen M."/>
            <person name="Cleland C.A."/>
            <person name="Copeland A."/>
            <person name="Dalin E."/>
            <person name="Dehal P."/>
            <person name="Denys M."/>
            <person name="Detter J.C."/>
            <person name="Escobar J."/>
            <person name="Flowers D."/>
            <person name="Fotopulos D."/>
            <person name="Garcia C."/>
            <person name="Georgescu A.M."/>
            <person name="Glavina T."/>
            <person name="Gomez M."/>
            <person name="Gonzales E."/>
            <person name="Groza M."/>
            <person name="Hammon N."/>
            <person name="Hawkins T."/>
            <person name="Haydu L."/>
            <person name="Ho I."/>
            <person name="Huang W."/>
            <person name="Israni S."/>
            <person name="Jett J."/>
            <person name="Kadner K."/>
            <person name="Kimball H."/>
            <person name="Kobayashi A."/>
            <person name="Larionov V."/>
            <person name="Leem S.-H."/>
            <person name="Lopez F."/>
            <person name="Lou Y."/>
            <person name="Lowry S."/>
            <person name="Malfatti S."/>
            <person name="Martinez D."/>
            <person name="McCready P.M."/>
            <person name="Medina C."/>
            <person name="Morgan J."/>
            <person name="Nelson K."/>
            <person name="Nolan M."/>
            <person name="Ovcharenko I."/>
            <person name="Pitluck S."/>
            <person name="Pollard M."/>
            <person name="Popkie A.P."/>
            <person name="Predki P."/>
            <person name="Quan G."/>
            <person name="Ramirez L."/>
            <person name="Rash S."/>
            <person name="Retterer J."/>
            <person name="Rodriguez A."/>
            <person name="Rogers S."/>
            <person name="Salamov A."/>
            <person name="Salazar A."/>
            <person name="She X."/>
            <person name="Smith D."/>
            <person name="Slezak T."/>
            <person name="Solovyev V."/>
            <person name="Thayer N."/>
            <person name="Tice H."/>
            <person name="Tsai M."/>
            <person name="Ustaszewska A."/>
            <person name="Vo N."/>
            <person name="Wagner M."/>
            <person name="Wheeler J."/>
            <person name="Wu K."/>
            <person name="Xie G."/>
            <person name="Yang J."/>
            <person name="Dubchak I."/>
            <person name="Furey T.S."/>
            <person name="DeJong P."/>
            <person name="Dickson M."/>
            <person name="Gordon D."/>
            <person name="Eichler E.E."/>
            <person name="Pennacchio L.A."/>
            <person name="Richardson P."/>
            <person name="Stubbs L."/>
            <person name="Rokhsar D.S."/>
            <person name="Myers R.M."/>
            <person name="Rubin E.M."/>
            <person name="Lucas S.M."/>
        </authorList>
    </citation>
    <scope>NUCLEOTIDE SEQUENCE [LARGE SCALE GENOMIC DNA]</scope>
</reference>
<reference key="2">
    <citation type="submission" date="2005-07" db="EMBL/GenBank/DDBJ databases">
        <authorList>
            <person name="Mural R.J."/>
            <person name="Istrail S."/>
            <person name="Sutton G.G."/>
            <person name="Florea L."/>
            <person name="Halpern A.L."/>
            <person name="Mobarry C.M."/>
            <person name="Lippert R."/>
            <person name="Walenz B."/>
            <person name="Shatkay H."/>
            <person name="Dew I."/>
            <person name="Miller J.R."/>
            <person name="Flanigan M.J."/>
            <person name="Edwards N.J."/>
            <person name="Bolanos R."/>
            <person name="Fasulo D."/>
            <person name="Halldorsson B.V."/>
            <person name="Hannenhalli S."/>
            <person name="Turner R."/>
            <person name="Yooseph S."/>
            <person name="Lu F."/>
            <person name="Nusskern D.R."/>
            <person name="Shue B.C."/>
            <person name="Zheng X.H."/>
            <person name="Zhong F."/>
            <person name="Delcher A.L."/>
            <person name="Huson D.H."/>
            <person name="Kravitz S.A."/>
            <person name="Mouchard L."/>
            <person name="Reinert K."/>
            <person name="Remington K.A."/>
            <person name="Clark A.G."/>
            <person name="Waterman M.S."/>
            <person name="Eichler E.E."/>
            <person name="Adams M.D."/>
            <person name="Hunkapiller M.W."/>
            <person name="Myers E.W."/>
            <person name="Venter J.C."/>
        </authorList>
    </citation>
    <scope>NUCLEOTIDE SEQUENCE [LARGE SCALE GENOMIC DNA]</scope>
</reference>
<reference key="3">
    <citation type="journal article" date="2004" name="Genome Res.">
        <title>The status, quality, and expansion of the NIH full-length cDNA project: the Mammalian Gene Collection (MGC).</title>
        <authorList>
            <consortium name="The MGC Project Team"/>
        </authorList>
    </citation>
    <scope>NUCLEOTIDE SEQUENCE [LARGE SCALE MRNA]</scope>
</reference>
<name>Z780B_HUMAN</name>
<organism>
    <name type="scientific">Homo sapiens</name>
    <name type="common">Human</name>
    <dbReference type="NCBI Taxonomy" id="9606"/>
    <lineage>
        <taxon>Eukaryota</taxon>
        <taxon>Metazoa</taxon>
        <taxon>Chordata</taxon>
        <taxon>Craniata</taxon>
        <taxon>Vertebrata</taxon>
        <taxon>Euteleostomi</taxon>
        <taxon>Mammalia</taxon>
        <taxon>Eutheria</taxon>
        <taxon>Euarchontoglires</taxon>
        <taxon>Primates</taxon>
        <taxon>Haplorrhini</taxon>
        <taxon>Catarrhini</taxon>
        <taxon>Hominidae</taxon>
        <taxon>Homo</taxon>
    </lineage>
</organism>
<sequence>MVHGSVTFRDVAIDFSQEEWECLQPDQRTLYRDVMLENYSHLISLGSSISKPDVITLLEQEKEPWIVVSKETSRWYPDLESKYGPEKISPENDIFEINLPKHVIKQISKTLGLEAFYFRNDSEYRSRFEGRQGHQEGYINQKIISYEEMPAYTHASPIHNTHKPYECKECGKYFSCGSNLIQHQSIHTGEKPYKCKECGKAFQLHIQLTRHQKFHTGEKTFECKECGKAFNLPTQLNRHKNIHTVKKLFECKECGKSFNRSSNLTQHQSIHAGVKPYQCKECGKAFNRGSNLIQHQKIHSNEKPFVCRECEMAFRYHYQLIEHCRIHTGEKPFECKECRKAFTLLTKLVRHQKIHMGEKPFECRECGKAFSLLNQLNRHKNIHTGEKPFECKECGKSFNRSSNLIQHQSIHADVKPYECKECGKGFNRGANLIQHQKIHSNEKPFVCRECEMAFRYHYQLIQHCQIHTGGKPFECKECGKAFSLLTQLARHKNIHTGEKPFECKDCGKAFNRGSNLVQHQSIHTGEKPYECKECGKAFRLHLQLSQHEKTHTGEKPFECKECGKFFRRGSNLNQHRSIHTGKKPFECKECGKAFRLHMHLIRHQKFHTGEKPFECKECGKAFSLHTQLNHHKNIHTGEKPFKCKECGKSFNRVSNLVQHQSIHAGVKPYECKECGKGFSRVSNLIQHQKTHSSAKPFVCKECRKTFRYHYQLTEHYRIHTGEKPFECKECGKAFGLLTQLAQHQIIHTGEKPFKCKECGKAFNRGSNLVQPQSIHTGEKPYECKECGKAFRLHLQLSLHQKLVQVRNPLNVRNVGQPSDISSNLLNIRKFILG</sequence>
<protein>
    <recommendedName>
        <fullName>Zinc finger protein 780B</fullName>
    </recommendedName>
    <alternativeName>
        <fullName>Zinc finger protein 779</fullName>
    </alternativeName>
</protein>
<dbReference type="EMBL" id="AC007842">
    <property type="protein sequence ID" value="AAD39268.1"/>
    <property type="molecule type" value="Genomic_DNA"/>
</dbReference>
<dbReference type="EMBL" id="CH471126">
    <property type="protein sequence ID" value="EAW56932.1"/>
    <property type="molecule type" value="Genomic_DNA"/>
</dbReference>
<dbReference type="EMBL" id="BC136960">
    <property type="protein sequence ID" value="AAI36961.1"/>
    <property type="molecule type" value="mRNA"/>
</dbReference>
<dbReference type="CCDS" id="CCDS46077.1"/>
<dbReference type="RefSeq" id="NP_001005851.1">
    <property type="nucleotide sequence ID" value="NM_001005851.3"/>
</dbReference>
<dbReference type="RefSeq" id="XP_005258650.1">
    <property type="nucleotide sequence ID" value="XM_005258593.3"/>
</dbReference>
<dbReference type="RefSeq" id="XP_016881914.1">
    <property type="nucleotide sequence ID" value="XM_017026425.3"/>
</dbReference>
<dbReference type="RefSeq" id="XP_016881915.1">
    <property type="nucleotide sequence ID" value="XM_017026426.2"/>
</dbReference>
<dbReference type="RefSeq" id="XP_016881916.1">
    <property type="nucleotide sequence ID" value="XM_017026427.2"/>
</dbReference>
<dbReference type="RefSeq" id="XP_047294295.1">
    <property type="nucleotide sequence ID" value="XM_047438339.1"/>
</dbReference>
<dbReference type="RefSeq" id="XP_047294296.1">
    <property type="nucleotide sequence ID" value="XM_047438340.1"/>
</dbReference>
<dbReference type="RefSeq" id="XP_047294297.1">
    <property type="nucleotide sequence ID" value="XM_047438341.1"/>
</dbReference>
<dbReference type="RefSeq" id="XP_047294298.1">
    <property type="nucleotide sequence ID" value="XM_047438342.1"/>
</dbReference>
<dbReference type="RefSeq" id="XP_054176048.1">
    <property type="nucleotide sequence ID" value="XM_054320073.1"/>
</dbReference>
<dbReference type="RefSeq" id="XP_054176049.1">
    <property type="nucleotide sequence ID" value="XM_054320074.1"/>
</dbReference>
<dbReference type="RefSeq" id="XP_054176050.1">
    <property type="nucleotide sequence ID" value="XM_054320075.1"/>
</dbReference>
<dbReference type="RefSeq" id="XP_054176051.1">
    <property type="nucleotide sequence ID" value="XM_054320076.1"/>
</dbReference>
<dbReference type="RefSeq" id="XP_054176052.1">
    <property type="nucleotide sequence ID" value="XM_054320077.1"/>
</dbReference>
<dbReference type="RefSeq" id="XP_054176053.1">
    <property type="nucleotide sequence ID" value="XM_054320078.1"/>
</dbReference>
<dbReference type="RefSeq" id="XP_054176054.1">
    <property type="nucleotide sequence ID" value="XM_054320079.1"/>
</dbReference>
<dbReference type="RefSeq" id="XP_054176055.1">
    <property type="nucleotide sequence ID" value="XM_054320080.1"/>
</dbReference>
<dbReference type="RefSeq" id="XP_054187601.1">
    <property type="nucleotide sequence ID" value="XM_054331626.1"/>
</dbReference>
<dbReference type="RefSeq" id="XP_054187602.1">
    <property type="nucleotide sequence ID" value="XM_054331627.1"/>
</dbReference>
<dbReference type="RefSeq" id="XP_054187603.1">
    <property type="nucleotide sequence ID" value="XM_054331628.1"/>
</dbReference>
<dbReference type="RefSeq" id="XP_054187604.1">
    <property type="nucleotide sequence ID" value="XM_054331629.1"/>
</dbReference>
<dbReference type="RefSeq" id="XP_054187605.1">
    <property type="nucleotide sequence ID" value="XM_054331630.1"/>
</dbReference>
<dbReference type="RefSeq" id="XP_054187606.1">
    <property type="nucleotide sequence ID" value="XM_054331631.1"/>
</dbReference>
<dbReference type="RefSeq" id="XP_054187607.1">
    <property type="nucleotide sequence ID" value="XM_054331632.1"/>
</dbReference>
<dbReference type="RefSeq" id="XP_054187608.1">
    <property type="nucleotide sequence ID" value="XM_054331633.1"/>
</dbReference>
<dbReference type="SMR" id="Q9Y6R6"/>
<dbReference type="BioGRID" id="127853">
    <property type="interactions" value="1"/>
</dbReference>
<dbReference type="FunCoup" id="Q9Y6R6">
    <property type="interactions" value="61"/>
</dbReference>
<dbReference type="IntAct" id="Q9Y6R6">
    <property type="interactions" value="1"/>
</dbReference>
<dbReference type="STRING" id="9606.ENSP00000391641"/>
<dbReference type="GlyGen" id="Q9Y6R6">
    <property type="glycosylation" value="2 sites, 1 O-linked glycan (2 sites)"/>
</dbReference>
<dbReference type="iPTMnet" id="Q9Y6R6"/>
<dbReference type="PhosphoSitePlus" id="Q9Y6R6"/>
<dbReference type="BioMuta" id="ZNF780B"/>
<dbReference type="DMDM" id="74762083"/>
<dbReference type="jPOST" id="Q9Y6R6"/>
<dbReference type="MassIVE" id="Q9Y6R6"/>
<dbReference type="PaxDb" id="9606-ENSP00000391641"/>
<dbReference type="PeptideAtlas" id="Q9Y6R6"/>
<dbReference type="Antibodypedia" id="839">
    <property type="antibodies" value="91 antibodies from 16 providers"/>
</dbReference>
<dbReference type="DNASU" id="163131"/>
<dbReference type="Ensembl" id="ENST00000434248.6">
    <property type="protein sequence ID" value="ENSP00000391641.1"/>
    <property type="gene ID" value="ENSG00000128000.17"/>
</dbReference>
<dbReference type="Ensembl" id="ENST00000625684.3">
    <property type="protein sequence ID" value="ENSP00000487572.1"/>
    <property type="gene ID" value="ENSG00000281601.5"/>
</dbReference>
<dbReference type="Ensembl" id="ENST00000678949.1">
    <property type="protein sequence ID" value="ENSP00000503959.1"/>
    <property type="gene ID" value="ENSG00000281601.5"/>
</dbReference>
<dbReference type="GeneID" id="163131"/>
<dbReference type="KEGG" id="hsa:163131"/>
<dbReference type="MANE-Select" id="ENST00000434248.6">
    <property type="protein sequence ID" value="ENSP00000391641.1"/>
    <property type="RefSeq nucleotide sequence ID" value="NM_001005851.3"/>
    <property type="RefSeq protein sequence ID" value="NP_001005851.1"/>
</dbReference>
<dbReference type="UCSC" id="uc002omu.3">
    <property type="organism name" value="human"/>
</dbReference>
<dbReference type="AGR" id="HGNC:33109"/>
<dbReference type="CTD" id="163131"/>
<dbReference type="DisGeNET" id="163131"/>
<dbReference type="GeneCards" id="ZNF780B"/>
<dbReference type="HGNC" id="HGNC:33109">
    <property type="gene designation" value="ZNF780B"/>
</dbReference>
<dbReference type="HPA" id="ENSG00000128000">
    <property type="expression patterns" value="Low tissue specificity"/>
</dbReference>
<dbReference type="neXtProt" id="NX_Q9Y6R6"/>
<dbReference type="OpenTargets" id="ENSG00000128000"/>
<dbReference type="PharmGKB" id="PA162410426"/>
<dbReference type="VEuPathDB" id="HostDB:ENSG00000128000"/>
<dbReference type="eggNOG" id="KOG1721">
    <property type="taxonomic scope" value="Eukaryota"/>
</dbReference>
<dbReference type="GeneTree" id="ENSGT00940000164600"/>
<dbReference type="InParanoid" id="Q9Y6R6"/>
<dbReference type="OMA" id="AFRHQYQ"/>
<dbReference type="OrthoDB" id="9411774at2759"/>
<dbReference type="PAN-GO" id="Q9Y6R6">
    <property type="GO annotations" value="4 GO annotations based on evolutionary models"/>
</dbReference>
<dbReference type="PhylomeDB" id="Q9Y6R6"/>
<dbReference type="TreeFam" id="TF343410"/>
<dbReference type="PathwayCommons" id="Q9Y6R6"/>
<dbReference type="SignaLink" id="Q9Y6R6"/>
<dbReference type="BioGRID-ORCS" id="163131">
    <property type="hits" value="10 hits in 1182 CRISPR screens"/>
</dbReference>
<dbReference type="GenomeRNAi" id="163131"/>
<dbReference type="Pharos" id="Q9Y6R6">
    <property type="development level" value="Tdark"/>
</dbReference>
<dbReference type="PRO" id="PR:Q9Y6R6"/>
<dbReference type="Proteomes" id="UP000005640">
    <property type="component" value="Chromosome 19"/>
</dbReference>
<dbReference type="RNAct" id="Q9Y6R6">
    <property type="molecule type" value="protein"/>
</dbReference>
<dbReference type="Bgee" id="ENSG00000128000">
    <property type="expression patterns" value="Expressed in corpus callosum and 104 other cell types or tissues"/>
</dbReference>
<dbReference type="ExpressionAtlas" id="Q9Y6R6">
    <property type="expression patterns" value="baseline and differential"/>
</dbReference>
<dbReference type="GO" id="GO:0005634">
    <property type="term" value="C:nucleus"/>
    <property type="evidence" value="ECO:0000318"/>
    <property type="project" value="GO_Central"/>
</dbReference>
<dbReference type="GO" id="GO:0001228">
    <property type="term" value="F:DNA-binding transcription activator activity, RNA polymerase II-specific"/>
    <property type="evidence" value="ECO:0000318"/>
    <property type="project" value="GO_Central"/>
</dbReference>
<dbReference type="GO" id="GO:0000978">
    <property type="term" value="F:RNA polymerase II cis-regulatory region sequence-specific DNA binding"/>
    <property type="evidence" value="ECO:0000318"/>
    <property type="project" value="GO_Central"/>
</dbReference>
<dbReference type="GO" id="GO:0008270">
    <property type="term" value="F:zinc ion binding"/>
    <property type="evidence" value="ECO:0007669"/>
    <property type="project" value="UniProtKB-KW"/>
</dbReference>
<dbReference type="GO" id="GO:0006357">
    <property type="term" value="P:regulation of transcription by RNA polymerase II"/>
    <property type="evidence" value="ECO:0000318"/>
    <property type="project" value="GO_Central"/>
</dbReference>
<dbReference type="CDD" id="cd07765">
    <property type="entry name" value="KRAB_A-box"/>
    <property type="match status" value="1"/>
</dbReference>
<dbReference type="FunFam" id="3.30.160.60:FF:002308">
    <property type="match status" value="2"/>
</dbReference>
<dbReference type="FunFam" id="3.30.160.60:FF:003928">
    <property type="match status" value="2"/>
</dbReference>
<dbReference type="FunFam" id="3.30.160.60:FF:000020">
    <property type="entry name" value="Zinc finger protein 14 homolog"/>
    <property type="match status" value="2"/>
</dbReference>
<dbReference type="FunFam" id="3.30.160.60:FF:000551">
    <property type="entry name" value="zinc finger protein 197 isoform X1"/>
    <property type="match status" value="3"/>
</dbReference>
<dbReference type="FunFam" id="3.30.160.60:FF:000058">
    <property type="entry name" value="Zinc finger protein 2 homolog"/>
    <property type="match status" value="1"/>
</dbReference>
<dbReference type="FunFam" id="3.30.160.60:FF:000690">
    <property type="entry name" value="Zinc finger protein 354C"/>
    <property type="match status" value="1"/>
</dbReference>
<dbReference type="FunFam" id="3.30.160.60:FF:000338">
    <property type="entry name" value="zinc finger protein 383"/>
    <property type="match status" value="1"/>
</dbReference>
<dbReference type="FunFam" id="3.30.160.60:FF:001498">
    <property type="entry name" value="Zinc finger protein 404"/>
    <property type="match status" value="1"/>
</dbReference>
<dbReference type="FunFam" id="3.30.160.60:FF:002254">
    <property type="entry name" value="Zinc finger protein 540"/>
    <property type="match status" value="2"/>
</dbReference>
<dbReference type="FunFam" id="3.30.160.60:FF:000384">
    <property type="entry name" value="Zinc finger protein 550"/>
    <property type="match status" value="1"/>
</dbReference>
<dbReference type="FunFam" id="3.30.160.60:FF:001270">
    <property type="entry name" value="zinc finger protein 583 isoform X1"/>
    <property type="match status" value="1"/>
</dbReference>
<dbReference type="FunFam" id="3.30.160.60:FF:000051">
    <property type="entry name" value="zinc finger protein 585A"/>
    <property type="match status" value="1"/>
</dbReference>
<dbReference type="FunFam" id="3.30.160.60:FF:000895">
    <property type="entry name" value="Zinc finger protein 597"/>
    <property type="match status" value="1"/>
</dbReference>
<dbReference type="FunFam" id="3.30.160.60:FF:001014">
    <property type="entry name" value="Zinc finger protein 597"/>
    <property type="match status" value="1"/>
</dbReference>
<dbReference type="FunFam" id="3.30.160.60:FF:001111">
    <property type="entry name" value="Zinc finger protein 92 homolog"/>
    <property type="match status" value="3"/>
</dbReference>
<dbReference type="Gene3D" id="6.10.140.140">
    <property type="match status" value="1"/>
</dbReference>
<dbReference type="Gene3D" id="3.30.160.60">
    <property type="entry name" value="Classic Zinc Finger"/>
    <property type="match status" value="23"/>
</dbReference>
<dbReference type="InterPro" id="IPR050752">
    <property type="entry name" value="C2H2-ZF_domain"/>
</dbReference>
<dbReference type="InterPro" id="IPR001909">
    <property type="entry name" value="KRAB"/>
</dbReference>
<dbReference type="InterPro" id="IPR036051">
    <property type="entry name" value="KRAB_dom_sf"/>
</dbReference>
<dbReference type="InterPro" id="IPR036236">
    <property type="entry name" value="Znf_C2H2_sf"/>
</dbReference>
<dbReference type="InterPro" id="IPR013087">
    <property type="entry name" value="Znf_C2H2_type"/>
</dbReference>
<dbReference type="PANTHER" id="PTHR24384">
    <property type="entry name" value="FINGER PUTATIVE TRANSCRIPTION FACTOR FAMILY-RELATED"/>
    <property type="match status" value="1"/>
</dbReference>
<dbReference type="PANTHER" id="PTHR24384:SF235">
    <property type="entry name" value="ZINC FINGER PROTEIN 519"/>
    <property type="match status" value="1"/>
</dbReference>
<dbReference type="Pfam" id="PF01352">
    <property type="entry name" value="KRAB"/>
    <property type="match status" value="1"/>
</dbReference>
<dbReference type="Pfam" id="PF00096">
    <property type="entry name" value="zf-C2H2"/>
    <property type="match status" value="18"/>
</dbReference>
<dbReference type="Pfam" id="PF13912">
    <property type="entry name" value="zf-C2H2_6"/>
    <property type="match status" value="1"/>
</dbReference>
<dbReference type="SMART" id="SM00349">
    <property type="entry name" value="KRAB"/>
    <property type="match status" value="1"/>
</dbReference>
<dbReference type="SMART" id="SM00355">
    <property type="entry name" value="ZnF_C2H2"/>
    <property type="match status" value="23"/>
</dbReference>
<dbReference type="SUPFAM" id="SSF57667">
    <property type="entry name" value="beta-beta-alpha zinc fingers"/>
    <property type="match status" value="12"/>
</dbReference>
<dbReference type="SUPFAM" id="SSF109640">
    <property type="entry name" value="KRAB domain (Kruppel-associated box)"/>
    <property type="match status" value="1"/>
</dbReference>
<dbReference type="PROSITE" id="PS50805">
    <property type="entry name" value="KRAB"/>
    <property type="match status" value="1"/>
</dbReference>
<dbReference type="PROSITE" id="PS00028">
    <property type="entry name" value="ZINC_FINGER_C2H2_1"/>
    <property type="match status" value="21"/>
</dbReference>
<dbReference type="PROSITE" id="PS50157">
    <property type="entry name" value="ZINC_FINGER_C2H2_2"/>
    <property type="match status" value="23"/>
</dbReference>
<accession>Q9Y6R6</accession>
<accession>B9EH00</accession>
<proteinExistence type="evidence at protein level"/>
<feature type="chain" id="PRO_0000263088" description="Zinc finger protein 780B">
    <location>
        <begin position="1"/>
        <end position="833"/>
    </location>
</feature>
<feature type="domain" description="KRAB" evidence="3">
    <location>
        <begin position="6"/>
        <end position="77"/>
    </location>
</feature>
<feature type="zinc finger region" description="C2H2-type 1" evidence="2">
    <location>
        <begin position="165"/>
        <end position="187"/>
    </location>
</feature>
<feature type="zinc finger region" description="C2H2-type 2" evidence="2">
    <location>
        <begin position="193"/>
        <end position="215"/>
    </location>
</feature>
<feature type="zinc finger region" description="C2H2-type 3" evidence="2">
    <location>
        <begin position="221"/>
        <end position="243"/>
    </location>
</feature>
<feature type="zinc finger region" description="C2H2-type 4" evidence="2">
    <location>
        <begin position="249"/>
        <end position="271"/>
    </location>
</feature>
<feature type="zinc finger region" description="C2H2-type 5" evidence="2">
    <location>
        <begin position="277"/>
        <end position="299"/>
    </location>
</feature>
<feature type="zinc finger region" description="C2H2-type 6" evidence="2">
    <location>
        <begin position="305"/>
        <end position="327"/>
    </location>
</feature>
<feature type="zinc finger region" description="C2H2-type 7" evidence="2">
    <location>
        <begin position="333"/>
        <end position="355"/>
    </location>
</feature>
<feature type="zinc finger region" description="C2H2-type 8" evidence="2">
    <location>
        <begin position="361"/>
        <end position="383"/>
    </location>
</feature>
<feature type="zinc finger region" description="C2H2-type 9" evidence="2">
    <location>
        <begin position="389"/>
        <end position="411"/>
    </location>
</feature>
<feature type="zinc finger region" description="C2H2-type 10" evidence="2">
    <location>
        <begin position="417"/>
        <end position="439"/>
    </location>
</feature>
<feature type="zinc finger region" description="C2H2-type 11" evidence="2">
    <location>
        <begin position="445"/>
        <end position="467"/>
    </location>
</feature>
<feature type="zinc finger region" description="C2H2-type 12" evidence="2">
    <location>
        <begin position="473"/>
        <end position="495"/>
    </location>
</feature>
<feature type="zinc finger region" description="C2H2-type 13" evidence="2">
    <location>
        <begin position="501"/>
        <end position="523"/>
    </location>
</feature>
<feature type="zinc finger region" description="C2H2-type 14" evidence="2">
    <location>
        <begin position="529"/>
        <end position="551"/>
    </location>
</feature>
<feature type="zinc finger region" description="C2H2-type 15" evidence="2">
    <location>
        <begin position="557"/>
        <end position="579"/>
    </location>
</feature>
<feature type="zinc finger region" description="C2H2-type 16" evidence="2">
    <location>
        <begin position="585"/>
        <end position="607"/>
    </location>
</feature>
<feature type="zinc finger region" description="C2H2-type 17" evidence="2">
    <location>
        <begin position="613"/>
        <end position="635"/>
    </location>
</feature>
<feature type="zinc finger region" description="C2H2-type 18" evidence="2">
    <location>
        <begin position="641"/>
        <end position="663"/>
    </location>
</feature>
<feature type="zinc finger region" description="C2H2-type 19" evidence="2">
    <location>
        <begin position="669"/>
        <end position="691"/>
    </location>
</feature>
<feature type="zinc finger region" description="C2H2-type 20" evidence="2">
    <location>
        <begin position="697"/>
        <end position="719"/>
    </location>
</feature>
<feature type="zinc finger region" description="C2H2-type 21" evidence="2">
    <location>
        <begin position="725"/>
        <end position="747"/>
    </location>
</feature>
<feature type="zinc finger region" description="C2H2-type 22; degenerate" evidence="2">
    <location>
        <begin position="753"/>
        <end position="775"/>
    </location>
</feature>
<feature type="zinc finger region" description="C2H2-type 23; degenerate" evidence="2">
    <location>
        <begin position="781"/>
        <end position="803"/>
    </location>
</feature>
<gene>
    <name type="primary">ZNF780B</name>
    <name type="synonym">ZNF779</name>
</gene>
<evidence type="ECO:0000250" key="1"/>
<evidence type="ECO:0000255" key="2">
    <source>
        <dbReference type="PROSITE-ProRule" id="PRU00042"/>
    </source>
</evidence>
<evidence type="ECO:0000255" key="3">
    <source>
        <dbReference type="PROSITE-ProRule" id="PRU00119"/>
    </source>
</evidence>
<evidence type="ECO:0000305" key="4"/>
<comment type="function">
    <text evidence="1">May be involved in transcriptional regulation.</text>
</comment>
<comment type="subcellular location">
    <subcellularLocation>
        <location evidence="4">Nucleus</location>
    </subcellularLocation>
</comment>
<comment type="similarity">
    <text evidence="4">Belongs to the krueppel C2H2-type zinc-finger protein family.</text>
</comment>